<accession>B1J262</accession>
<dbReference type="EC" id="2.1.1.166" evidence="1"/>
<dbReference type="EMBL" id="CP000949">
    <property type="protein sequence ID" value="ACA71218.1"/>
    <property type="molecule type" value="Genomic_DNA"/>
</dbReference>
<dbReference type="SMR" id="B1J262"/>
<dbReference type="STRING" id="390235.PputW619_0713"/>
<dbReference type="KEGG" id="ppw:PputW619_0713"/>
<dbReference type="eggNOG" id="COG0293">
    <property type="taxonomic scope" value="Bacteria"/>
</dbReference>
<dbReference type="HOGENOM" id="CLU_009422_4_0_6"/>
<dbReference type="OrthoDB" id="9790080at2"/>
<dbReference type="GO" id="GO:0005737">
    <property type="term" value="C:cytoplasm"/>
    <property type="evidence" value="ECO:0007669"/>
    <property type="project" value="UniProtKB-SubCell"/>
</dbReference>
<dbReference type="GO" id="GO:0008650">
    <property type="term" value="F:rRNA (uridine-2'-O-)-methyltransferase activity"/>
    <property type="evidence" value="ECO:0007669"/>
    <property type="project" value="UniProtKB-UniRule"/>
</dbReference>
<dbReference type="FunFam" id="3.40.50.150:FF:000005">
    <property type="entry name" value="Ribosomal RNA large subunit methyltransferase E"/>
    <property type="match status" value="1"/>
</dbReference>
<dbReference type="Gene3D" id="3.40.50.150">
    <property type="entry name" value="Vaccinia Virus protein VP39"/>
    <property type="match status" value="1"/>
</dbReference>
<dbReference type="HAMAP" id="MF_01547">
    <property type="entry name" value="RNA_methyltr_E"/>
    <property type="match status" value="1"/>
</dbReference>
<dbReference type="InterPro" id="IPR050082">
    <property type="entry name" value="RNA_methyltr_RlmE"/>
</dbReference>
<dbReference type="InterPro" id="IPR002877">
    <property type="entry name" value="RNA_MeTrfase_FtsJ_dom"/>
</dbReference>
<dbReference type="InterPro" id="IPR015507">
    <property type="entry name" value="rRNA-MeTfrase_E"/>
</dbReference>
<dbReference type="InterPro" id="IPR029063">
    <property type="entry name" value="SAM-dependent_MTases_sf"/>
</dbReference>
<dbReference type="NCBIfam" id="NF008390">
    <property type="entry name" value="PRK11188.1"/>
    <property type="match status" value="1"/>
</dbReference>
<dbReference type="PANTHER" id="PTHR10920">
    <property type="entry name" value="RIBOSOMAL RNA METHYLTRANSFERASE"/>
    <property type="match status" value="1"/>
</dbReference>
<dbReference type="PANTHER" id="PTHR10920:SF18">
    <property type="entry name" value="RRNA METHYLTRANSFERASE 2, MITOCHONDRIAL"/>
    <property type="match status" value="1"/>
</dbReference>
<dbReference type="Pfam" id="PF01728">
    <property type="entry name" value="FtsJ"/>
    <property type="match status" value="1"/>
</dbReference>
<dbReference type="PIRSF" id="PIRSF005461">
    <property type="entry name" value="23S_rRNA_mtase"/>
    <property type="match status" value="1"/>
</dbReference>
<dbReference type="SUPFAM" id="SSF53335">
    <property type="entry name" value="S-adenosyl-L-methionine-dependent methyltransferases"/>
    <property type="match status" value="1"/>
</dbReference>
<evidence type="ECO:0000255" key="1">
    <source>
        <dbReference type="HAMAP-Rule" id="MF_01547"/>
    </source>
</evidence>
<proteinExistence type="inferred from homology"/>
<feature type="chain" id="PRO_1000195007" description="Ribosomal RNA large subunit methyltransferase E">
    <location>
        <begin position="1"/>
        <end position="208"/>
    </location>
</feature>
<feature type="active site" description="Proton acceptor" evidence="1">
    <location>
        <position position="162"/>
    </location>
</feature>
<feature type="binding site" evidence="1">
    <location>
        <position position="61"/>
    </location>
    <ligand>
        <name>S-adenosyl-L-methionine</name>
        <dbReference type="ChEBI" id="CHEBI:59789"/>
    </ligand>
</feature>
<feature type="binding site" evidence="1">
    <location>
        <position position="63"/>
    </location>
    <ligand>
        <name>S-adenosyl-L-methionine</name>
        <dbReference type="ChEBI" id="CHEBI:59789"/>
    </ligand>
</feature>
<feature type="binding site" evidence="1">
    <location>
        <position position="81"/>
    </location>
    <ligand>
        <name>S-adenosyl-L-methionine</name>
        <dbReference type="ChEBI" id="CHEBI:59789"/>
    </ligand>
</feature>
<feature type="binding site" evidence="1">
    <location>
        <position position="97"/>
    </location>
    <ligand>
        <name>S-adenosyl-L-methionine</name>
        <dbReference type="ChEBI" id="CHEBI:59789"/>
    </ligand>
</feature>
<feature type="binding site" evidence="1">
    <location>
        <position position="122"/>
    </location>
    <ligand>
        <name>S-adenosyl-L-methionine</name>
        <dbReference type="ChEBI" id="CHEBI:59789"/>
    </ligand>
</feature>
<protein>
    <recommendedName>
        <fullName evidence="1">Ribosomal RNA large subunit methyltransferase E</fullName>
        <ecNumber evidence="1">2.1.1.166</ecNumber>
    </recommendedName>
    <alternativeName>
        <fullName evidence="1">23S rRNA Um2552 methyltransferase</fullName>
    </alternativeName>
    <alternativeName>
        <fullName evidence="1">rRNA (uridine-2'-O-)-methyltransferase</fullName>
    </alternativeName>
</protein>
<name>RLME_PSEPW</name>
<keyword id="KW-0963">Cytoplasm</keyword>
<keyword id="KW-0489">Methyltransferase</keyword>
<keyword id="KW-0698">rRNA processing</keyword>
<keyword id="KW-0949">S-adenosyl-L-methionine</keyword>
<keyword id="KW-0808">Transferase</keyword>
<gene>
    <name evidence="1" type="primary">rlmE</name>
    <name evidence="1" type="synonym">ftsJ</name>
    <name evidence="1" type="synonym">rrmJ</name>
    <name type="ordered locus">PputW619_0713</name>
</gene>
<reference key="1">
    <citation type="submission" date="2008-02" db="EMBL/GenBank/DDBJ databases">
        <title>Complete sequence of Pseudomonas putida W619.</title>
        <authorList>
            <person name="Copeland A."/>
            <person name="Lucas S."/>
            <person name="Lapidus A."/>
            <person name="Barry K."/>
            <person name="Detter J.C."/>
            <person name="Glavina del Rio T."/>
            <person name="Dalin E."/>
            <person name="Tice H."/>
            <person name="Pitluck S."/>
            <person name="Chain P."/>
            <person name="Malfatti S."/>
            <person name="Shin M."/>
            <person name="Vergez L."/>
            <person name="Schmutz J."/>
            <person name="Larimer F."/>
            <person name="Land M."/>
            <person name="Hauser L."/>
            <person name="Kyrpides N."/>
            <person name="Kim E."/>
            <person name="Taghavi S."/>
            <person name="Vangronsveld D."/>
            <person name="van der Lelie D."/>
            <person name="Richardson P."/>
        </authorList>
    </citation>
    <scope>NUCLEOTIDE SEQUENCE [LARGE SCALE GENOMIC DNA]</scope>
    <source>
        <strain>W619</strain>
    </source>
</reference>
<organism>
    <name type="scientific">Pseudomonas putida (strain W619)</name>
    <dbReference type="NCBI Taxonomy" id="390235"/>
    <lineage>
        <taxon>Bacteria</taxon>
        <taxon>Pseudomonadati</taxon>
        <taxon>Pseudomonadota</taxon>
        <taxon>Gammaproteobacteria</taxon>
        <taxon>Pseudomonadales</taxon>
        <taxon>Pseudomonadaceae</taxon>
        <taxon>Pseudomonas</taxon>
    </lineage>
</organism>
<comment type="function">
    <text evidence="1">Specifically methylates the uridine in position 2552 of 23S rRNA at the 2'-O position of the ribose in the fully assembled 50S ribosomal subunit.</text>
</comment>
<comment type="catalytic activity">
    <reaction evidence="1">
        <text>uridine(2552) in 23S rRNA + S-adenosyl-L-methionine = 2'-O-methyluridine(2552) in 23S rRNA + S-adenosyl-L-homocysteine + H(+)</text>
        <dbReference type="Rhea" id="RHEA:42720"/>
        <dbReference type="Rhea" id="RHEA-COMP:10202"/>
        <dbReference type="Rhea" id="RHEA-COMP:10203"/>
        <dbReference type="ChEBI" id="CHEBI:15378"/>
        <dbReference type="ChEBI" id="CHEBI:57856"/>
        <dbReference type="ChEBI" id="CHEBI:59789"/>
        <dbReference type="ChEBI" id="CHEBI:65315"/>
        <dbReference type="ChEBI" id="CHEBI:74478"/>
        <dbReference type="EC" id="2.1.1.166"/>
    </reaction>
</comment>
<comment type="subcellular location">
    <subcellularLocation>
        <location evidence="1">Cytoplasm</location>
    </subcellularLocation>
</comment>
<comment type="similarity">
    <text evidence="1">Belongs to the class I-like SAM-binding methyltransferase superfamily. RNA methyltransferase RlmE family.</text>
</comment>
<sequence>MVQRSKSSANWLREHFNDPFVKQAQKDGYRSRASYKLLEIQEKDRLIRPGMSVIDLGAAPGGWSQVTSRLIGGQGRLIASDILEMDSIPDVTFIQGDFTQDEVLQQILDAVGDSHVDLVISDMAPNMSGTPEVDMPRAMFLCELALDLATRVLKPGGDFLIKIFQGEGFDMYLKDVRTKFDKVQMRKPSSSRDRSREQYLLGKGFKGA</sequence>